<dbReference type="EMBL" id="CU234118">
    <property type="protein sequence ID" value="CAL74568.1"/>
    <property type="molecule type" value="Genomic_DNA"/>
</dbReference>
<dbReference type="RefSeq" id="WP_011923832.1">
    <property type="nucleotide sequence ID" value="NC_009445.1"/>
</dbReference>
<dbReference type="SMR" id="A4YKZ2"/>
<dbReference type="STRING" id="114615.BRADO0635"/>
<dbReference type="KEGG" id="bra:BRADO0635"/>
<dbReference type="eggNOG" id="COG0227">
    <property type="taxonomic scope" value="Bacteria"/>
</dbReference>
<dbReference type="HOGENOM" id="CLU_064548_4_2_5"/>
<dbReference type="OrthoDB" id="9805609at2"/>
<dbReference type="Proteomes" id="UP000001994">
    <property type="component" value="Chromosome"/>
</dbReference>
<dbReference type="GO" id="GO:0022625">
    <property type="term" value="C:cytosolic large ribosomal subunit"/>
    <property type="evidence" value="ECO:0007669"/>
    <property type="project" value="TreeGrafter"/>
</dbReference>
<dbReference type="GO" id="GO:0003735">
    <property type="term" value="F:structural constituent of ribosome"/>
    <property type="evidence" value="ECO:0007669"/>
    <property type="project" value="InterPro"/>
</dbReference>
<dbReference type="GO" id="GO:0006412">
    <property type="term" value="P:translation"/>
    <property type="evidence" value="ECO:0007669"/>
    <property type="project" value="UniProtKB-UniRule"/>
</dbReference>
<dbReference type="Gene3D" id="2.30.170.40">
    <property type="entry name" value="Ribosomal protein L28/L24"/>
    <property type="match status" value="1"/>
</dbReference>
<dbReference type="HAMAP" id="MF_00373">
    <property type="entry name" value="Ribosomal_bL28"/>
    <property type="match status" value="1"/>
</dbReference>
<dbReference type="InterPro" id="IPR026569">
    <property type="entry name" value="Ribosomal_bL28"/>
</dbReference>
<dbReference type="InterPro" id="IPR034704">
    <property type="entry name" value="Ribosomal_bL28/bL31-like_sf"/>
</dbReference>
<dbReference type="InterPro" id="IPR001383">
    <property type="entry name" value="Ribosomal_bL28_bact-type"/>
</dbReference>
<dbReference type="InterPro" id="IPR037147">
    <property type="entry name" value="Ribosomal_bL28_sf"/>
</dbReference>
<dbReference type="NCBIfam" id="TIGR00009">
    <property type="entry name" value="L28"/>
    <property type="match status" value="1"/>
</dbReference>
<dbReference type="PANTHER" id="PTHR13528">
    <property type="entry name" value="39S RIBOSOMAL PROTEIN L28, MITOCHONDRIAL"/>
    <property type="match status" value="1"/>
</dbReference>
<dbReference type="PANTHER" id="PTHR13528:SF2">
    <property type="entry name" value="LARGE RIBOSOMAL SUBUNIT PROTEIN BL28M"/>
    <property type="match status" value="1"/>
</dbReference>
<dbReference type="Pfam" id="PF00830">
    <property type="entry name" value="Ribosomal_L28"/>
    <property type="match status" value="1"/>
</dbReference>
<dbReference type="SUPFAM" id="SSF143800">
    <property type="entry name" value="L28p-like"/>
    <property type="match status" value="1"/>
</dbReference>
<accession>A4YKZ2</accession>
<reference key="1">
    <citation type="journal article" date="2007" name="Science">
        <title>Legumes symbioses: absence of nod genes in photosynthetic bradyrhizobia.</title>
        <authorList>
            <person name="Giraud E."/>
            <person name="Moulin L."/>
            <person name="Vallenet D."/>
            <person name="Barbe V."/>
            <person name="Cytryn E."/>
            <person name="Avarre J.-C."/>
            <person name="Jaubert M."/>
            <person name="Simon D."/>
            <person name="Cartieaux F."/>
            <person name="Prin Y."/>
            <person name="Bena G."/>
            <person name="Hannibal L."/>
            <person name="Fardoux J."/>
            <person name="Kojadinovic M."/>
            <person name="Vuillet L."/>
            <person name="Lajus A."/>
            <person name="Cruveiller S."/>
            <person name="Rouy Z."/>
            <person name="Mangenot S."/>
            <person name="Segurens B."/>
            <person name="Dossat C."/>
            <person name="Franck W.L."/>
            <person name="Chang W.-S."/>
            <person name="Saunders E."/>
            <person name="Bruce D."/>
            <person name="Richardson P."/>
            <person name="Normand P."/>
            <person name="Dreyfus B."/>
            <person name="Pignol D."/>
            <person name="Stacey G."/>
            <person name="Emerich D."/>
            <person name="Vermeglio A."/>
            <person name="Medigue C."/>
            <person name="Sadowsky M."/>
        </authorList>
    </citation>
    <scope>NUCLEOTIDE SEQUENCE [LARGE SCALE GENOMIC DNA]</scope>
    <source>
        <strain>ORS 278</strain>
    </source>
</reference>
<sequence>MSRRCELTAKGPQVGHKVSHSNIKTKRRFLPNLCNVTFISDALGRNVRLRVSTNAIKSVDHNGGLDAYLMKANAAALSPRALELKRAIEKKAAEAAPVAKAS</sequence>
<proteinExistence type="inferred from homology"/>
<feature type="chain" id="PRO_1000007181" description="Large ribosomal subunit protein bL28">
    <location>
        <begin position="1"/>
        <end position="102"/>
    </location>
</feature>
<feature type="region of interest" description="Disordered" evidence="2">
    <location>
        <begin position="1"/>
        <end position="20"/>
    </location>
</feature>
<comment type="similarity">
    <text evidence="1">Belongs to the bacterial ribosomal protein bL28 family.</text>
</comment>
<organism>
    <name type="scientific">Bradyrhizobium sp. (strain ORS 278)</name>
    <dbReference type="NCBI Taxonomy" id="114615"/>
    <lineage>
        <taxon>Bacteria</taxon>
        <taxon>Pseudomonadati</taxon>
        <taxon>Pseudomonadota</taxon>
        <taxon>Alphaproteobacteria</taxon>
        <taxon>Hyphomicrobiales</taxon>
        <taxon>Nitrobacteraceae</taxon>
        <taxon>Bradyrhizobium</taxon>
    </lineage>
</organism>
<gene>
    <name evidence="1" type="primary">rpmB</name>
    <name type="ordered locus">BRADO0635</name>
</gene>
<keyword id="KW-1185">Reference proteome</keyword>
<keyword id="KW-0687">Ribonucleoprotein</keyword>
<keyword id="KW-0689">Ribosomal protein</keyword>
<name>RL28_BRASO</name>
<evidence type="ECO:0000255" key="1">
    <source>
        <dbReference type="HAMAP-Rule" id="MF_00373"/>
    </source>
</evidence>
<evidence type="ECO:0000256" key="2">
    <source>
        <dbReference type="SAM" id="MobiDB-lite"/>
    </source>
</evidence>
<evidence type="ECO:0000305" key="3"/>
<protein>
    <recommendedName>
        <fullName evidence="1">Large ribosomal subunit protein bL28</fullName>
    </recommendedName>
    <alternativeName>
        <fullName evidence="3">50S ribosomal protein L28</fullName>
    </alternativeName>
</protein>